<reference key="1">
    <citation type="journal article" date="2002" name="Nature">
        <title>The genome sequence of Schizosaccharomyces pombe.</title>
        <authorList>
            <person name="Wood V."/>
            <person name="Gwilliam R."/>
            <person name="Rajandream M.A."/>
            <person name="Lyne M.H."/>
            <person name="Lyne R."/>
            <person name="Stewart A."/>
            <person name="Sgouros J.G."/>
            <person name="Peat N."/>
            <person name="Hayles J."/>
            <person name="Baker S.G."/>
            <person name="Basham D."/>
            <person name="Bowman S."/>
            <person name="Brooks K."/>
            <person name="Brown D."/>
            <person name="Brown S."/>
            <person name="Chillingworth T."/>
            <person name="Churcher C.M."/>
            <person name="Collins M."/>
            <person name="Connor R."/>
            <person name="Cronin A."/>
            <person name="Davis P."/>
            <person name="Feltwell T."/>
            <person name="Fraser A."/>
            <person name="Gentles S."/>
            <person name="Goble A."/>
            <person name="Hamlin N."/>
            <person name="Harris D.E."/>
            <person name="Hidalgo J."/>
            <person name="Hodgson G."/>
            <person name="Holroyd S."/>
            <person name="Hornsby T."/>
            <person name="Howarth S."/>
            <person name="Huckle E.J."/>
            <person name="Hunt S."/>
            <person name="Jagels K."/>
            <person name="James K.D."/>
            <person name="Jones L."/>
            <person name="Jones M."/>
            <person name="Leather S."/>
            <person name="McDonald S."/>
            <person name="McLean J."/>
            <person name="Mooney P."/>
            <person name="Moule S."/>
            <person name="Mungall K.L."/>
            <person name="Murphy L.D."/>
            <person name="Niblett D."/>
            <person name="Odell C."/>
            <person name="Oliver K."/>
            <person name="O'Neil S."/>
            <person name="Pearson D."/>
            <person name="Quail M.A."/>
            <person name="Rabbinowitsch E."/>
            <person name="Rutherford K.M."/>
            <person name="Rutter S."/>
            <person name="Saunders D."/>
            <person name="Seeger K."/>
            <person name="Sharp S."/>
            <person name="Skelton J."/>
            <person name="Simmonds M.N."/>
            <person name="Squares R."/>
            <person name="Squares S."/>
            <person name="Stevens K."/>
            <person name="Taylor K."/>
            <person name="Taylor R.G."/>
            <person name="Tivey A."/>
            <person name="Walsh S.V."/>
            <person name="Warren T."/>
            <person name="Whitehead S."/>
            <person name="Woodward J.R."/>
            <person name="Volckaert G."/>
            <person name="Aert R."/>
            <person name="Robben J."/>
            <person name="Grymonprez B."/>
            <person name="Weltjens I."/>
            <person name="Vanstreels E."/>
            <person name="Rieger M."/>
            <person name="Schaefer M."/>
            <person name="Mueller-Auer S."/>
            <person name="Gabel C."/>
            <person name="Fuchs M."/>
            <person name="Duesterhoeft A."/>
            <person name="Fritzc C."/>
            <person name="Holzer E."/>
            <person name="Moestl D."/>
            <person name="Hilbert H."/>
            <person name="Borzym K."/>
            <person name="Langer I."/>
            <person name="Beck A."/>
            <person name="Lehrach H."/>
            <person name="Reinhardt R."/>
            <person name="Pohl T.M."/>
            <person name="Eger P."/>
            <person name="Zimmermann W."/>
            <person name="Wedler H."/>
            <person name="Wambutt R."/>
            <person name="Purnelle B."/>
            <person name="Goffeau A."/>
            <person name="Cadieu E."/>
            <person name="Dreano S."/>
            <person name="Gloux S."/>
            <person name="Lelaure V."/>
            <person name="Mottier S."/>
            <person name="Galibert F."/>
            <person name="Aves S.J."/>
            <person name="Xiang Z."/>
            <person name="Hunt C."/>
            <person name="Moore K."/>
            <person name="Hurst S.M."/>
            <person name="Lucas M."/>
            <person name="Rochet M."/>
            <person name="Gaillardin C."/>
            <person name="Tallada V.A."/>
            <person name="Garzon A."/>
            <person name="Thode G."/>
            <person name="Daga R.R."/>
            <person name="Cruzado L."/>
            <person name="Jimenez J."/>
            <person name="Sanchez M."/>
            <person name="del Rey F."/>
            <person name="Benito J."/>
            <person name="Dominguez A."/>
            <person name="Revuelta J.L."/>
            <person name="Moreno S."/>
            <person name="Armstrong J."/>
            <person name="Forsburg S.L."/>
            <person name="Cerutti L."/>
            <person name="Lowe T."/>
            <person name="McCombie W.R."/>
            <person name="Paulsen I."/>
            <person name="Potashkin J."/>
            <person name="Shpakovski G.V."/>
            <person name="Ussery D."/>
            <person name="Barrell B.G."/>
            <person name="Nurse P."/>
        </authorList>
    </citation>
    <scope>NUCLEOTIDE SEQUENCE [LARGE SCALE GENOMIC DNA]</scope>
    <source>
        <strain>972 / ATCC 24843</strain>
    </source>
</reference>
<accession>O94501</accession>
<comment type="function">
    <text evidence="1">Molecular chaperone; assists the folding of proteins upon ATP hydrolysis. Known to play a role, in vitro, in the folding of actin and tubulin (By similarity).</text>
</comment>
<comment type="subunit">
    <text evidence="1">Heterooligomeric complex of about 850 to 900 kDa that forms two stacked rings, 12 to 16 nm in diameter.</text>
</comment>
<comment type="subcellular location">
    <subcellularLocation>
        <location evidence="1">Cytoplasm</location>
    </subcellularLocation>
</comment>
<comment type="similarity">
    <text evidence="2">Belongs to the TCP-1 chaperonin family.</text>
</comment>
<keyword id="KW-0067">ATP-binding</keyword>
<keyword id="KW-0143">Chaperone</keyword>
<keyword id="KW-0963">Cytoplasm</keyword>
<keyword id="KW-0547">Nucleotide-binding</keyword>
<keyword id="KW-1185">Reference proteome</keyword>
<name>TCPA_SCHPO</name>
<feature type="chain" id="PRO_0000128314" description="T-complex protein 1 subunit alpha">
    <location>
        <begin position="1"/>
        <end position="556"/>
    </location>
</feature>
<protein>
    <recommendedName>
        <fullName>T-complex protein 1 subunit alpha</fullName>
        <shortName>TCP-1-alpha</shortName>
    </recommendedName>
    <alternativeName>
        <fullName>CCT-alpha</fullName>
    </alternativeName>
</protein>
<proteinExistence type="inferred from homology"/>
<organism>
    <name type="scientific">Schizosaccharomyces pombe (strain 972 / ATCC 24843)</name>
    <name type="common">Fission yeast</name>
    <dbReference type="NCBI Taxonomy" id="284812"/>
    <lineage>
        <taxon>Eukaryota</taxon>
        <taxon>Fungi</taxon>
        <taxon>Dikarya</taxon>
        <taxon>Ascomycota</taxon>
        <taxon>Taphrinomycotina</taxon>
        <taxon>Schizosaccharomycetes</taxon>
        <taxon>Schizosaccharomycetales</taxon>
        <taxon>Schizosaccharomycetaceae</taxon>
        <taxon>Schizosaccharomyces</taxon>
    </lineage>
</organism>
<dbReference type="EMBL" id="CU329671">
    <property type="protein sequence ID" value="CAA22677.1"/>
    <property type="molecule type" value="Genomic_DNA"/>
</dbReference>
<dbReference type="PIR" id="T39383">
    <property type="entry name" value="T39383"/>
</dbReference>
<dbReference type="RefSeq" id="NP_595949.1">
    <property type="nucleotide sequence ID" value="NM_001021858.2"/>
</dbReference>
<dbReference type="SMR" id="O94501"/>
<dbReference type="BioGRID" id="276245">
    <property type="interactions" value="6"/>
</dbReference>
<dbReference type="FunCoup" id="O94501">
    <property type="interactions" value="911"/>
</dbReference>
<dbReference type="IntAct" id="O94501">
    <property type="interactions" value="1"/>
</dbReference>
<dbReference type="STRING" id="284812.O94501"/>
<dbReference type="iPTMnet" id="O94501"/>
<dbReference type="PaxDb" id="4896-SPBC12D12.03.1"/>
<dbReference type="EnsemblFungi" id="SPBC12D12.03.1">
    <property type="protein sequence ID" value="SPBC12D12.03.1:pep"/>
    <property type="gene ID" value="SPBC12D12.03"/>
</dbReference>
<dbReference type="GeneID" id="2539691"/>
<dbReference type="KEGG" id="spo:2539691"/>
<dbReference type="PomBase" id="SPBC12D12.03">
    <property type="gene designation" value="cct1"/>
</dbReference>
<dbReference type="VEuPathDB" id="FungiDB:SPBC12D12.03"/>
<dbReference type="eggNOG" id="KOG0360">
    <property type="taxonomic scope" value="Eukaryota"/>
</dbReference>
<dbReference type="HOGENOM" id="CLU_008891_7_3_1"/>
<dbReference type="InParanoid" id="O94501"/>
<dbReference type="OMA" id="RGPNDYQ"/>
<dbReference type="PhylomeDB" id="O94501"/>
<dbReference type="Reactome" id="R-SPO-390471">
    <property type="pathway name" value="Association of TriC/CCT with target proteins during biosynthesis"/>
</dbReference>
<dbReference type="Reactome" id="R-SPO-6814122">
    <property type="pathway name" value="Cooperation of PDCL (PhLP1) and TRiC/CCT in G-protein beta folding"/>
</dbReference>
<dbReference type="PRO" id="PR:O94501"/>
<dbReference type="Proteomes" id="UP000002485">
    <property type="component" value="Chromosome II"/>
</dbReference>
<dbReference type="GO" id="GO:0005832">
    <property type="term" value="C:chaperonin-containing T-complex"/>
    <property type="evidence" value="ECO:0000314"/>
    <property type="project" value="PomBase"/>
</dbReference>
<dbReference type="GO" id="GO:0005856">
    <property type="term" value="C:cytoskeleton"/>
    <property type="evidence" value="ECO:0000266"/>
    <property type="project" value="PomBase"/>
</dbReference>
<dbReference type="GO" id="GO:0005829">
    <property type="term" value="C:cytosol"/>
    <property type="evidence" value="ECO:0007005"/>
    <property type="project" value="PomBase"/>
</dbReference>
<dbReference type="GO" id="GO:0005634">
    <property type="term" value="C:nucleus"/>
    <property type="evidence" value="ECO:0007005"/>
    <property type="project" value="PomBase"/>
</dbReference>
<dbReference type="GO" id="GO:0005524">
    <property type="term" value="F:ATP binding"/>
    <property type="evidence" value="ECO:0000255"/>
    <property type="project" value="PomBase"/>
</dbReference>
<dbReference type="GO" id="GO:0016887">
    <property type="term" value="F:ATP hydrolysis activity"/>
    <property type="evidence" value="ECO:0007669"/>
    <property type="project" value="InterPro"/>
</dbReference>
<dbReference type="GO" id="GO:0140662">
    <property type="term" value="F:ATP-dependent protein folding chaperone"/>
    <property type="evidence" value="ECO:0007669"/>
    <property type="project" value="InterPro"/>
</dbReference>
<dbReference type="GO" id="GO:0051082">
    <property type="term" value="F:unfolded protein binding"/>
    <property type="evidence" value="ECO:0000318"/>
    <property type="project" value="GO_Central"/>
</dbReference>
<dbReference type="GO" id="GO:0006457">
    <property type="term" value="P:protein folding"/>
    <property type="evidence" value="ECO:0000318"/>
    <property type="project" value="GO_Central"/>
</dbReference>
<dbReference type="CDD" id="cd03335">
    <property type="entry name" value="TCP1_alpha"/>
    <property type="match status" value="1"/>
</dbReference>
<dbReference type="FunFam" id="3.50.7.10:FF:000009">
    <property type="entry name" value="T-complex protein 1 subunit alpha"/>
    <property type="match status" value="1"/>
</dbReference>
<dbReference type="FunFam" id="1.10.560.10:FF:000070">
    <property type="entry name" value="Uncharacterized protein"/>
    <property type="match status" value="1"/>
</dbReference>
<dbReference type="Gene3D" id="3.50.7.10">
    <property type="entry name" value="GroEL"/>
    <property type="match status" value="1"/>
</dbReference>
<dbReference type="Gene3D" id="1.10.560.10">
    <property type="entry name" value="GroEL-like equatorial domain"/>
    <property type="match status" value="1"/>
</dbReference>
<dbReference type="Gene3D" id="3.30.260.10">
    <property type="entry name" value="TCP-1-like chaperonin intermediate domain"/>
    <property type="match status" value="1"/>
</dbReference>
<dbReference type="InterPro" id="IPR012715">
    <property type="entry name" value="Chap_CCT_alpha"/>
</dbReference>
<dbReference type="InterPro" id="IPR017998">
    <property type="entry name" value="Chaperone_TCP-1"/>
</dbReference>
<dbReference type="InterPro" id="IPR002194">
    <property type="entry name" value="Chaperonin_TCP-1_CS"/>
</dbReference>
<dbReference type="InterPro" id="IPR002423">
    <property type="entry name" value="Cpn60/GroEL/TCP-1"/>
</dbReference>
<dbReference type="InterPro" id="IPR027409">
    <property type="entry name" value="GroEL-like_apical_dom_sf"/>
</dbReference>
<dbReference type="InterPro" id="IPR027413">
    <property type="entry name" value="GROEL-like_equatorial_sf"/>
</dbReference>
<dbReference type="InterPro" id="IPR027410">
    <property type="entry name" value="TCP-1-like_intermed_sf"/>
</dbReference>
<dbReference type="InterPro" id="IPR053374">
    <property type="entry name" value="TCP-1_chaperonin"/>
</dbReference>
<dbReference type="InterPro" id="IPR054827">
    <property type="entry name" value="thermosome_alpha"/>
</dbReference>
<dbReference type="NCBIfam" id="TIGR02340">
    <property type="entry name" value="chap_CCT_alpha"/>
    <property type="match status" value="1"/>
</dbReference>
<dbReference type="NCBIfam" id="NF041082">
    <property type="entry name" value="thermosome_alpha"/>
    <property type="match status" value="1"/>
</dbReference>
<dbReference type="NCBIfam" id="NF041083">
    <property type="entry name" value="thermosome_beta"/>
    <property type="match status" value="1"/>
</dbReference>
<dbReference type="PANTHER" id="PTHR11353">
    <property type="entry name" value="CHAPERONIN"/>
    <property type="match status" value="1"/>
</dbReference>
<dbReference type="Pfam" id="PF00118">
    <property type="entry name" value="Cpn60_TCP1"/>
    <property type="match status" value="1"/>
</dbReference>
<dbReference type="PRINTS" id="PR00304">
    <property type="entry name" value="TCOMPLEXTCP1"/>
</dbReference>
<dbReference type="SUPFAM" id="SSF52029">
    <property type="entry name" value="GroEL apical domain-like"/>
    <property type="match status" value="1"/>
</dbReference>
<dbReference type="SUPFAM" id="SSF48592">
    <property type="entry name" value="GroEL equatorial domain-like"/>
    <property type="match status" value="1"/>
</dbReference>
<dbReference type="SUPFAM" id="SSF54849">
    <property type="entry name" value="GroEL-intermediate domain like"/>
    <property type="match status" value="1"/>
</dbReference>
<dbReference type="PROSITE" id="PS00750">
    <property type="entry name" value="TCP1_1"/>
    <property type="match status" value="1"/>
</dbReference>
<dbReference type="PROSITE" id="PS00751">
    <property type="entry name" value="TCP1_2"/>
    <property type="match status" value="1"/>
</dbReference>
<dbReference type="PROSITE" id="PS00995">
    <property type="entry name" value="TCP1_3"/>
    <property type="match status" value="1"/>
</dbReference>
<sequence length="556" mass="60047">MFQAPRESTLFLSGEKISGEDVRNQNVLATTAIANVVKSSLGPVGLDKMLVDDIGDVTVTNDGATILSLLDVEHPAGKVLVELAQQQDKEVGDGTTSVVIIAAELLRRANELVKNKIHPTTIITGYRLAIREAVKFMTDVLSCSVDSLGKESLINVAKTSMSSKIIGNDSDFFSTMAVDAMLSVKTSNSKGETRYPVKAVNILKAHGKSSRESVLVKGYALNCTIASQAMKTRVQNAKIAVLDMDLQKTKMALGVHVTIDDPDQLEKIREREVMITLERVKKILNAGANVILTTKGIDDLCLKSIIEAGAMAVRRCKKEDLRRIAKASGATLLSSLSNLEGEETFESSYLGSAEEVVQEKFSDDECILVKGTKAYSSASIVLRGPNEYSLDEMERSMHDSLSVVKRTLESGKVVPGGGAVETALSIYLENFATSLGSREQLAIAEFAQALLIIPRTLAVNAAKDSTELTAKLRAYHAASQNAEVTDVKKRGYKNYGLDLLNGVIRDNVKAGVLEPSMSKLKSLKSAVEACIAILRIDTSIKLDPERQPEDPHAGLH</sequence>
<gene>
    <name type="primary">cct1</name>
    <name type="ORF">SPBC12D12.03</name>
</gene>
<evidence type="ECO:0000250" key="1"/>
<evidence type="ECO:0000305" key="2"/>